<organism>
    <name type="scientific">Sagittaria sagittifolia</name>
    <name type="common">Arrowhead</name>
    <dbReference type="NCBI Taxonomy" id="4451"/>
    <lineage>
        <taxon>Eukaryota</taxon>
        <taxon>Viridiplantae</taxon>
        <taxon>Streptophyta</taxon>
        <taxon>Embryophyta</taxon>
        <taxon>Tracheophyta</taxon>
        <taxon>Spermatophyta</taxon>
        <taxon>Magnoliopsida</taxon>
        <taxon>Liliopsida</taxon>
        <taxon>Alismataceae</taxon>
        <taxon>Sagittaria</taxon>
    </lineage>
</organism>
<comment type="function">
    <text>Possesses two reactive sites. Inhibits two molecules of trypsin simultaneously. Inhibits efficiently kallikrein, but chymotrypsin weakly.</text>
</comment>
<comment type="subcellular location">
    <subcellularLocation>
        <location>Secreted</location>
    </subcellularLocation>
</comment>
<comment type="similarity">
    <text evidence="2">Belongs to the protease inhibitor I3 (leguminous Kunitz-type inhibitor) family.</text>
</comment>
<comment type="sequence caution" evidence="2">
    <conflict type="miscellaneous discrepancy" ref="2"/>
    <text>Very different preliminary sequence.</text>
</comment>
<comment type="sequence caution" evidence="2">
    <conflict type="miscellaneous discrepancy" ref="3"/>
    <text>Very different preliminary sequence.</text>
</comment>
<comment type="sequence caution" evidence="2">
    <conflict type="miscellaneous discrepancy" ref="4"/>
    <text>Very different preliminary sequence.</text>
</comment>
<dbReference type="EMBL" id="D13820">
    <property type="protein sequence ID" value="BAA02973.1"/>
    <property type="molecule type" value="Genomic_DNA"/>
</dbReference>
<dbReference type="PIR" id="JX0247">
    <property type="entry name" value="JX0247"/>
</dbReference>
<dbReference type="SMR" id="P07479"/>
<dbReference type="MEROPS" id="I03.007"/>
<dbReference type="GO" id="GO:0005576">
    <property type="term" value="C:extracellular region"/>
    <property type="evidence" value="ECO:0007669"/>
    <property type="project" value="UniProtKB-SubCell"/>
</dbReference>
<dbReference type="GO" id="GO:0004867">
    <property type="term" value="F:serine-type endopeptidase inhibitor activity"/>
    <property type="evidence" value="ECO:0007669"/>
    <property type="project" value="UniProtKB-KW"/>
</dbReference>
<dbReference type="Gene3D" id="2.80.10.50">
    <property type="match status" value="2"/>
</dbReference>
<dbReference type="InterPro" id="IPR011065">
    <property type="entry name" value="Kunitz_inhibitor_STI-like_sf"/>
</dbReference>
<dbReference type="InterPro" id="IPR016308">
    <property type="entry name" value="Prot_inh_API-A/B"/>
</dbReference>
<dbReference type="InterPro" id="IPR002160">
    <property type="entry name" value="Prot_inh_Kunz-lg"/>
</dbReference>
<dbReference type="Pfam" id="PF00197">
    <property type="entry name" value="Kunitz_legume"/>
    <property type="match status" value="1"/>
</dbReference>
<dbReference type="PIRSF" id="PIRSF001653">
    <property type="entry name" value="API-B"/>
    <property type="match status" value="1"/>
</dbReference>
<dbReference type="SMART" id="SM00452">
    <property type="entry name" value="STI"/>
    <property type="match status" value="1"/>
</dbReference>
<dbReference type="SUPFAM" id="SSF50386">
    <property type="entry name" value="STI-like"/>
    <property type="match status" value="1"/>
</dbReference>
<evidence type="ECO:0000269" key="1">
    <source>
    </source>
</evidence>
<evidence type="ECO:0000305" key="2"/>
<name>IPRB_SAGSA</name>
<proteinExistence type="evidence at protein level"/>
<sequence length="181" mass="19174">MAASNALLLISGALLISLAVLCQGDPVVDSDGDAVQLNLGGRYPLYTIESAAIGFHGGLSTLHKDVCKSYVYEAPETDRGLPVSFSASATSEPVMQLGSRYKFSFLMPVPRICDTAWSVGKSTEETGVYKLAACSCEFCKIACPEVGSFNVNGKTLLGIGGEHFTVRFHKSDALAMKTAPQ</sequence>
<reference key="1">
    <citation type="journal article" date="1993" name="J. Biochem.">
        <title>cDNA and genomic structures of arrowhead proteinase inhibitors.</title>
        <authorList>
            <person name="Xu W."/>
            <person name="Tao W."/>
            <person name="Gong Z."/>
            <person name="Chi C.-W."/>
        </authorList>
    </citation>
    <scope>NUCLEOTIDE SEQUENCE [GENOMIC DNA]</scope>
</reference>
<reference key="2">
    <citation type="journal article" date="1992" name="J. Biochem.">
        <title>Primary structure and disulfide bridge location of arrowhead double-headed proteinase inhibitors.</title>
        <authorList>
            <person name="Yang H.-L."/>
            <person name="Luo R.-S."/>
            <person name="Wang L.-X."/>
            <person name="Zhu D.-X."/>
            <person name="Chi C.-W."/>
        </authorList>
    </citation>
    <scope>PROTEIN SEQUENCE OF 25-174</scope>
</reference>
<reference key="3">
    <citation type="journal article" date="1985" name="Biol. Chem. Hoppe-Seyler">
        <title>The complete amino-acid sequence of the proteinase inhibitor B from the root of the arrowhead (Sagittaria sagittifolia L.).</title>
        <authorList>
            <person name="Chi C.-W."/>
            <person name="Zhu D.-X."/>
            <person name="Lin N.-Q."/>
            <person name="Xu L.-X."/>
            <person name="Tan F.-L."/>
            <person name="Wang L.-X."/>
        </authorList>
    </citation>
    <scope>PRELIMINARY PROTEIN SEQUENCE OF 25-174</scope>
    <source>
        <tissue>Root</tissue>
    </source>
</reference>
<reference key="4">
    <citation type="journal article" date="1986" name="Sheng Wu Hua Xue Yu Sheng Wu Wu Li Xue Bao">
        <title>The complete amino-acid sequence of the arrowhead proteinase inhibitor B.</title>
        <authorList>
            <person name="Chi C.-W."/>
            <person name="Zhu D.-X."/>
            <person name="Lin N.-Q."/>
            <person name="Xu L.-X."/>
            <person name="Tan F.-L."/>
            <person name="Wang L.-X."/>
        </authorList>
    </citation>
    <scope>PRELIMINARY PROTEIN SEQUENCE OF 25-174</scope>
    <source>
        <tissue>Root</tissue>
    </source>
</reference>
<protein>
    <recommendedName>
        <fullName>Proteinase inhibitor B</fullName>
    </recommendedName>
    <alternativeName>
        <fullName>Double-headed proteinase inhibitor B</fullName>
        <shortName>API-B</shortName>
    </alternativeName>
</protein>
<accession>P07479</accession>
<feature type="signal peptide" evidence="1">
    <location>
        <begin position="1"/>
        <end position="24"/>
    </location>
</feature>
<feature type="chain" id="PRO_0000016898" description="Proteinase inhibitor B">
    <location>
        <begin position="25"/>
        <end position="181"/>
    </location>
</feature>
<feature type="site" description="Reactive bond for trypsin" evidence="2">
    <location>
        <begin position="68"/>
        <end position="69"/>
    </location>
</feature>
<feature type="site" description="Reactive bond" evidence="2">
    <location>
        <begin position="100"/>
        <end position="101"/>
    </location>
</feature>
<feature type="disulfide bond">
    <location>
        <begin position="67"/>
        <end position="113"/>
    </location>
</feature>
<feature type="disulfide bond">
    <location>
        <begin position="134"/>
        <end position="143"/>
    </location>
</feature>
<feature type="disulfide bond">
    <location>
        <begin position="136"/>
        <end position="139"/>
    </location>
</feature>
<feature type="sequence conflict" description="In Ref. 2; AA sequence." evidence="2" ref="2">
    <original>T</original>
    <variation>A</variation>
    <location>
        <position position="61"/>
    </location>
</feature>
<feature type="sequence conflict" description="In Ref. 2; AA sequence." evidence="2" ref="2">
    <original>N</original>
    <variation>D</variation>
    <location>
        <position position="152"/>
    </location>
</feature>
<feature type="sequence conflict" description="In Ref. 2; AA sequence." evidence="2" ref="2">
    <original>S</original>
    <variation>F</variation>
    <location>
        <position position="171"/>
    </location>
</feature>
<keyword id="KW-0903">Direct protein sequencing</keyword>
<keyword id="KW-1015">Disulfide bond</keyword>
<keyword id="KW-0646">Protease inhibitor</keyword>
<keyword id="KW-0964">Secreted</keyword>
<keyword id="KW-0722">Serine protease inhibitor</keyword>
<keyword id="KW-0732">Signal</keyword>